<organism>
    <name type="scientific">Clostridium acetobutylicum (strain ATCC 824 / DSM 792 / JCM 1419 / IAM 19013 / LMG 5710 / NBRC 13948 / NRRL B-527 / VKM B-1787 / 2291 / W)</name>
    <dbReference type="NCBI Taxonomy" id="272562"/>
    <lineage>
        <taxon>Bacteria</taxon>
        <taxon>Bacillati</taxon>
        <taxon>Bacillota</taxon>
        <taxon>Clostridia</taxon>
        <taxon>Eubacteriales</taxon>
        <taxon>Clostridiaceae</taxon>
        <taxon>Clostridium</taxon>
    </lineage>
</organism>
<evidence type="ECO:0000255" key="1">
    <source>
        <dbReference type="HAMAP-Rule" id="MF_01396"/>
    </source>
</evidence>
<dbReference type="EMBL" id="U52367">
    <property type="protein sequence ID" value="AAB50192.1"/>
    <property type="molecule type" value="Genomic_DNA"/>
</dbReference>
<dbReference type="EMBL" id="AF101055">
    <property type="protein sequence ID" value="AAD16421.1"/>
    <property type="molecule type" value="Genomic_DNA"/>
</dbReference>
<dbReference type="EMBL" id="AE001437">
    <property type="protein sequence ID" value="AAK80813.1"/>
    <property type="molecule type" value="Genomic_DNA"/>
</dbReference>
<dbReference type="PIR" id="B97253">
    <property type="entry name" value="B97253"/>
</dbReference>
<dbReference type="RefSeq" id="NP_349473.1">
    <property type="nucleotide sequence ID" value="NC_003030.1"/>
</dbReference>
<dbReference type="RefSeq" id="WP_010966154.1">
    <property type="nucleotide sequence ID" value="NC_003030.1"/>
</dbReference>
<dbReference type="SMR" id="O08310"/>
<dbReference type="STRING" id="272562.CA_C2870"/>
<dbReference type="GeneID" id="44999358"/>
<dbReference type="KEGG" id="cac:CA_C2870"/>
<dbReference type="PATRIC" id="fig|272562.8.peg.3054"/>
<dbReference type="eggNOG" id="COG0636">
    <property type="taxonomic scope" value="Bacteria"/>
</dbReference>
<dbReference type="HOGENOM" id="CLU_148047_2_1_9"/>
<dbReference type="OrthoDB" id="9810379at2"/>
<dbReference type="Proteomes" id="UP000000814">
    <property type="component" value="Chromosome"/>
</dbReference>
<dbReference type="GO" id="GO:0005886">
    <property type="term" value="C:plasma membrane"/>
    <property type="evidence" value="ECO:0007669"/>
    <property type="project" value="UniProtKB-SubCell"/>
</dbReference>
<dbReference type="GO" id="GO:0045259">
    <property type="term" value="C:proton-transporting ATP synthase complex"/>
    <property type="evidence" value="ECO:0007669"/>
    <property type="project" value="UniProtKB-KW"/>
</dbReference>
<dbReference type="GO" id="GO:0033177">
    <property type="term" value="C:proton-transporting two-sector ATPase complex, proton-transporting domain"/>
    <property type="evidence" value="ECO:0007669"/>
    <property type="project" value="InterPro"/>
</dbReference>
<dbReference type="GO" id="GO:0008289">
    <property type="term" value="F:lipid binding"/>
    <property type="evidence" value="ECO:0007669"/>
    <property type="project" value="UniProtKB-KW"/>
</dbReference>
<dbReference type="GO" id="GO:0046933">
    <property type="term" value="F:proton-transporting ATP synthase activity, rotational mechanism"/>
    <property type="evidence" value="ECO:0007669"/>
    <property type="project" value="UniProtKB-UniRule"/>
</dbReference>
<dbReference type="FunFam" id="1.20.20.10:FF:000002">
    <property type="entry name" value="ATP synthase subunit c"/>
    <property type="match status" value="1"/>
</dbReference>
<dbReference type="Gene3D" id="1.20.20.10">
    <property type="entry name" value="F1F0 ATP synthase subunit C"/>
    <property type="match status" value="1"/>
</dbReference>
<dbReference type="HAMAP" id="MF_01396">
    <property type="entry name" value="ATP_synth_c_bact"/>
    <property type="match status" value="1"/>
</dbReference>
<dbReference type="InterPro" id="IPR005953">
    <property type="entry name" value="ATP_synth_csu_bac/chlpt"/>
</dbReference>
<dbReference type="InterPro" id="IPR000454">
    <property type="entry name" value="ATP_synth_F0_csu"/>
</dbReference>
<dbReference type="InterPro" id="IPR020537">
    <property type="entry name" value="ATP_synth_F0_csu_DDCD_BS"/>
</dbReference>
<dbReference type="InterPro" id="IPR038662">
    <property type="entry name" value="ATP_synth_F0_csu_sf"/>
</dbReference>
<dbReference type="InterPro" id="IPR002379">
    <property type="entry name" value="ATPase_proteolipid_c-like_dom"/>
</dbReference>
<dbReference type="InterPro" id="IPR035921">
    <property type="entry name" value="F/V-ATP_Csub_sf"/>
</dbReference>
<dbReference type="NCBIfam" id="TIGR01260">
    <property type="entry name" value="ATP_synt_c"/>
    <property type="match status" value="1"/>
</dbReference>
<dbReference type="PANTHER" id="PTHR10031">
    <property type="entry name" value="ATP SYNTHASE LIPID-BINDING PROTEIN, MITOCHONDRIAL"/>
    <property type="match status" value="1"/>
</dbReference>
<dbReference type="PANTHER" id="PTHR10031:SF0">
    <property type="entry name" value="ATPASE PROTEIN 9"/>
    <property type="match status" value="1"/>
</dbReference>
<dbReference type="Pfam" id="PF00137">
    <property type="entry name" value="ATP-synt_C"/>
    <property type="match status" value="1"/>
</dbReference>
<dbReference type="PRINTS" id="PR00124">
    <property type="entry name" value="ATPASEC"/>
</dbReference>
<dbReference type="SUPFAM" id="SSF81333">
    <property type="entry name" value="F1F0 ATP synthase subunit C"/>
    <property type="match status" value="1"/>
</dbReference>
<dbReference type="PROSITE" id="PS00605">
    <property type="entry name" value="ATPASE_C"/>
    <property type="match status" value="1"/>
</dbReference>
<gene>
    <name evidence="1" type="primary">atpE</name>
    <name type="synonym">atpC</name>
    <name type="ordered locus">CA_C2870</name>
</gene>
<feature type="chain" id="PRO_0000112143" description="ATP synthase subunit c">
    <location>
        <begin position="1"/>
        <end position="81"/>
    </location>
</feature>
<feature type="transmembrane region" description="Helical" evidence="1">
    <location>
        <begin position="14"/>
        <end position="34"/>
    </location>
</feature>
<feature type="transmembrane region" description="Helical" evidence="1">
    <location>
        <begin position="60"/>
        <end position="80"/>
    </location>
</feature>
<feature type="site" description="Reversibly protonated during proton transport" evidence="1">
    <location>
        <position position="64"/>
    </location>
</feature>
<proteinExistence type="inferred from homology"/>
<comment type="function">
    <text evidence="1">F(1)F(0) ATP synthase produces ATP from ADP in the presence of a proton or sodium gradient. F-type ATPases consist of two structural domains, F(1) containing the extramembraneous catalytic core and F(0) containing the membrane proton channel, linked together by a central stalk and a peripheral stalk. During catalysis, ATP synthesis in the catalytic domain of F(1) is coupled via a rotary mechanism of the central stalk subunits to proton translocation.</text>
</comment>
<comment type="function">
    <text evidence="1">Key component of the F(0) channel; it plays a direct role in translocation across the membrane. A homomeric c-ring of between 10-14 subunits forms the central stalk rotor element with the F(1) delta and epsilon subunits.</text>
</comment>
<comment type="subunit">
    <text evidence="1">F-type ATPases have 2 components, F(1) - the catalytic core - and F(0) - the membrane proton channel. F(1) has five subunits: alpha(3), beta(3), gamma(1), delta(1), epsilon(1). F(0) has three main subunits: a(1), b(2) and c(10-14). The alpha and beta chains form an alternating ring which encloses part of the gamma chain. F(1) is attached to F(0) by a central stalk formed by the gamma and epsilon chains, while a peripheral stalk is formed by the delta and b chains.</text>
</comment>
<comment type="subcellular location">
    <subcellularLocation>
        <location evidence="1">Cell membrane</location>
        <topology evidence="1">Multi-pass membrane protein</topology>
    </subcellularLocation>
</comment>
<comment type="similarity">
    <text evidence="1">Belongs to the ATPase C chain family.</text>
</comment>
<keyword id="KW-0066">ATP synthesis</keyword>
<keyword id="KW-1003">Cell membrane</keyword>
<keyword id="KW-0138">CF(0)</keyword>
<keyword id="KW-0375">Hydrogen ion transport</keyword>
<keyword id="KW-0406">Ion transport</keyword>
<keyword id="KW-0446">Lipid-binding</keyword>
<keyword id="KW-0472">Membrane</keyword>
<keyword id="KW-1185">Reference proteome</keyword>
<keyword id="KW-0812">Transmembrane</keyword>
<keyword id="KW-1133">Transmembrane helix</keyword>
<keyword id="KW-0813">Transport</keyword>
<name>ATPL_CLOAB</name>
<reference key="1">
    <citation type="submission" date="1997-03" db="EMBL/GenBank/DDBJ databases">
        <title>Cloning and sequencing of the F0 structural subunits a, c, and b of the F-type ATP synthases from Clostridium acetobutylicum.</title>
        <authorList>
            <person name="Belouski E."/>
            <person name="Bennett G.N."/>
        </authorList>
    </citation>
    <scope>NUCLEOTIDE SEQUENCE [GENOMIC DNA]</scope>
    <source>
        <strain>ATCC 824 / DSM 792 / JCM 1419 / IAM 19013 / LMG 5710 / NBRC 13948 / NRRL B-527 / VKM B-1787 / 2291 / W</strain>
    </source>
</reference>
<reference key="2">
    <citation type="journal article" date="2000" name="DNA Seq.">
        <title>Sequence analysis of the atp operon of Clostridium acetobutylicum DSM 792 encoding the F0F1 ATP synthase.</title>
        <authorList>
            <person name="Externbrink T."/>
            <person name="Hujer S."/>
            <person name="Winzer K."/>
            <person name="Duerre P."/>
        </authorList>
    </citation>
    <scope>NUCLEOTIDE SEQUENCE [GENOMIC DNA]</scope>
    <source>
        <strain>ATCC 824 / DSM 792 / JCM 1419 / IAM 19013 / LMG 5710 / NBRC 13948 / NRRL B-527 / VKM B-1787 / 2291 / W</strain>
    </source>
</reference>
<reference key="3">
    <citation type="journal article" date="2001" name="J. Bacteriol.">
        <title>Genome sequence and comparative analysis of the solvent-producing bacterium Clostridium acetobutylicum.</title>
        <authorList>
            <person name="Noelling J."/>
            <person name="Breton G."/>
            <person name="Omelchenko M.V."/>
            <person name="Makarova K.S."/>
            <person name="Zeng Q."/>
            <person name="Gibson R."/>
            <person name="Lee H.M."/>
            <person name="Dubois J."/>
            <person name="Qiu D."/>
            <person name="Hitti J."/>
            <person name="Wolf Y.I."/>
            <person name="Tatusov R.L."/>
            <person name="Sabathe F."/>
            <person name="Doucette-Stamm L.A."/>
            <person name="Soucaille P."/>
            <person name="Daly M.J."/>
            <person name="Bennett G.N."/>
            <person name="Koonin E.V."/>
            <person name="Smith D.R."/>
        </authorList>
    </citation>
    <scope>NUCLEOTIDE SEQUENCE [LARGE SCALE GENOMIC DNA]</scope>
    <source>
        <strain>ATCC 824 / DSM 792 / JCM 1419 / IAM 19013 / LMG 5710 / NBRC 13948 / NRRL B-527 / VKM B-1787 / 2291 / W</strain>
    </source>
</reference>
<sequence length="81" mass="8322">MNIDSHTFLLGMQYLGAGLAAIGCIGGGVGIGTVTGKAVEAIGRQPESASKVMPTMIMGLAFAEVTSLYALFVAIMLLFVK</sequence>
<protein>
    <recommendedName>
        <fullName evidence="1">ATP synthase subunit c</fullName>
    </recommendedName>
    <alternativeName>
        <fullName evidence="1">ATP synthase F(0) sector subunit c</fullName>
    </alternativeName>
    <alternativeName>
        <fullName evidence="1">F-type ATPase subunit c</fullName>
        <shortName evidence="1">F-ATPase subunit c</shortName>
    </alternativeName>
    <alternativeName>
        <fullName evidence="1">Lipid-binding protein</fullName>
    </alternativeName>
</protein>
<accession>O08310</accession>